<name>RSF2_YEAST</name>
<evidence type="ECO:0000255" key="1">
    <source>
        <dbReference type="PROSITE-ProRule" id="PRU00042"/>
    </source>
</evidence>
<evidence type="ECO:0000256" key="2">
    <source>
        <dbReference type="SAM" id="MobiDB-lite"/>
    </source>
</evidence>
<evidence type="ECO:0000269" key="3">
    <source>
    </source>
</evidence>
<evidence type="ECO:0000269" key="4">
    <source>
    </source>
</evidence>
<evidence type="ECO:0000305" key="5"/>
<evidence type="ECO:0007744" key="6">
    <source>
    </source>
</evidence>
<evidence type="ECO:0007744" key="7">
    <source>
    </source>
</evidence>
<evidence type="ECO:0007744" key="8">
    <source>
    </source>
</evidence>
<sequence>MEPFAFGRGAPALCILTAAARINLDNFVPCCWALFRLSFFFPLDPAYIRNENKETRTSWISIEFFFFVKHCLSQHTFFSKTLAPKRNFRAKKLKDIGDTRIDRADKDFLLVPEPSMFVNGNQSNFAKPAGQGILPIPKKSRIIKTDKPRPFLCPTCTRGFVRQEHLKRHQHSHTREKPYLCIFCGRCFARRDLVLRHQQKLHAALVGTGDPRRMTPAPNSTSSFASKRRHSVAADDPTDLHIIKIAGNKETILPTPKNLAGKTSEELKEAVVALAKSNNVELPVSAPVMNDKREKTPPSKAGSLGFREFKFSTKGVPVHSASSDAVIDRANTPSSMHKTKRHASFSASSAMTYMSSSNSPHHSITNFELVEDAPHQVGFSTPQMTAKQLMESVSELDLPPLTLDEPPQAIKFNLNLFNNDPSGQQQQQQQQQQNSTSSTIVNSNNGSTVATPGVYLLSSGPSLTDLLTMNSAHAGAGGYMSSHHSPFDLGCFSHDKPTVSEFNLPSSFPNTIPSNSTTASNSYSNLANQTYRQMSNEQPLMSLSPKNPPTTVSDSSSTINFNPGTNNLLEPSMEPNDKDSNIDPAAIDDKWLSEFINNSDPKSTFKINFNHFNDIGFIYSPPSSRSSIPNKSPPNHSATSLNHEKASLSPRLNLSLNGSTDLPSTPQNQLKEPSYSDPISHSSHKRRRDSVMMDYDLSNFFSSRQLDISKVLNGTEQNNSHVNDDVLTLSFPGETDSNATQKQLPVLTPSDLLSPFSVPSVSQVLFTNELRSMMLADNNIDSGAFPTTSQLNDYVTYYKEEFHPFFSFIHLPSIIPNMDSYPLLLSISMVGALYGFHSTHAKVLANAASTQIRKSLKVSEKNPETTELWVIQTLVLLTFYCIFNKNTAVIKGMHGQLTTIIRLLKASRLNLPLESLCQPPIESDHIMEYENSPHMFSKIREQYNAPNQMNKNYQYFVLAQSRIRTCHAVLLISNLFSSLVGADCCFHSVDLKCGVPCYKEELYQCRNSDEWSDLLCQYKITLDSKFSLIELSNGNEAYENCLRFLSTGDSFFYGNARVSLSTCLSLLISIHEKILIERNNARISNNNTNSNNIELDDIEWKMTSRQRIDTMLKYWENLYLKNGGILTPTENSMSTINANPAMRLIIPVYLFAKMRRCLDLAHVIEKIWLKDWSNMNKALEEVCYDMGSLREATEYALNMVDAWTSFFTYIKQGKRRIFNTPVFATTCMFTAVLVISEYMKCVEDWARGYNANNPNSALLDFSDRVLWLKAERILRRLQMNLIPKECDVLKSYTDFLRWQDKDALDLSALNEEQAQRAMDPNTDINETIQLIVAASLSSKCLYLGVQILGDAPIWPIILSFAHGLQSRAIYSVTKKRNTRI</sequence>
<organism>
    <name type="scientific">Saccharomyces cerevisiae (strain ATCC 204508 / S288c)</name>
    <name type="common">Baker's yeast</name>
    <dbReference type="NCBI Taxonomy" id="559292"/>
    <lineage>
        <taxon>Eukaryota</taxon>
        <taxon>Fungi</taxon>
        <taxon>Dikarya</taxon>
        <taxon>Ascomycota</taxon>
        <taxon>Saccharomycotina</taxon>
        <taxon>Saccharomycetes</taxon>
        <taxon>Saccharomycetales</taxon>
        <taxon>Saccharomycetaceae</taxon>
        <taxon>Saccharomyces</taxon>
    </lineage>
</organism>
<gene>
    <name type="primary">RSF2</name>
    <name type="synonym">ZMS1</name>
    <name type="ordered locus">YJR127C</name>
    <name type="ORF">J2052</name>
</gene>
<proteinExistence type="evidence at protein level"/>
<feature type="chain" id="PRO_0000046861" description="Respiration factor 2">
    <location>
        <begin position="1"/>
        <end position="1380"/>
    </location>
</feature>
<feature type="zinc finger region" description="C2H2-type 1" evidence="1">
    <location>
        <begin position="151"/>
        <end position="173"/>
    </location>
</feature>
<feature type="zinc finger region" description="C2H2-type 2" evidence="1">
    <location>
        <begin position="179"/>
        <end position="202"/>
    </location>
</feature>
<feature type="region of interest" description="Disordered" evidence="2">
    <location>
        <begin position="208"/>
        <end position="231"/>
    </location>
</feature>
<feature type="region of interest" description="Disordered" evidence="2">
    <location>
        <begin position="413"/>
        <end position="445"/>
    </location>
</feature>
<feature type="region of interest" description="Disordered" evidence="2">
    <location>
        <begin position="544"/>
        <end position="584"/>
    </location>
</feature>
<feature type="region of interest" description="Disordered" evidence="2">
    <location>
        <begin position="624"/>
        <end position="643"/>
    </location>
</feature>
<feature type="region of interest" description="Disordered" evidence="2">
    <location>
        <begin position="652"/>
        <end position="688"/>
    </location>
</feature>
<feature type="compositionally biased region" description="Low complexity" evidence="2">
    <location>
        <begin position="424"/>
        <end position="445"/>
    </location>
</feature>
<feature type="compositionally biased region" description="Polar residues" evidence="2">
    <location>
        <begin position="544"/>
        <end position="569"/>
    </location>
</feature>
<feature type="compositionally biased region" description="Basic and acidic residues" evidence="2">
    <location>
        <begin position="575"/>
        <end position="584"/>
    </location>
</feature>
<feature type="compositionally biased region" description="Low complexity" evidence="2">
    <location>
        <begin position="624"/>
        <end position="634"/>
    </location>
</feature>
<feature type="compositionally biased region" description="Polar residues" evidence="2">
    <location>
        <begin position="652"/>
        <end position="681"/>
    </location>
</feature>
<feature type="modified residue" description="Phosphoserine" evidence="8">
    <location>
        <position position="231"/>
    </location>
</feature>
<feature type="modified residue" description="Phosphoserine" evidence="7">
    <location>
        <position position="322"/>
    </location>
</feature>
<feature type="modified residue" description="Phosphoserine" evidence="7">
    <location>
        <position position="544"/>
    </location>
</feature>
<feature type="modified residue" description="Phosphoserine" evidence="6">
    <location>
        <position position="632"/>
    </location>
</feature>
<feature type="sequence conflict" description="In Ref. 1; AAA35240." evidence="5" ref="1">
    <original>NL</original>
    <variation>IF</variation>
    <location>
        <begin position="1117"/>
        <end position="1118"/>
    </location>
</feature>
<feature type="sequence conflict" description="In Ref. 1; AAA35240." evidence="5" ref="1">
    <original>N</original>
    <variation>H</variation>
    <location>
        <position position="1131"/>
    </location>
</feature>
<keyword id="KW-0238">DNA-binding</keyword>
<keyword id="KW-0479">Metal-binding</keyword>
<keyword id="KW-0539">Nucleus</keyword>
<keyword id="KW-0597">Phosphoprotein</keyword>
<keyword id="KW-1185">Reference proteome</keyword>
<keyword id="KW-0677">Repeat</keyword>
<keyword id="KW-0804">Transcription</keyword>
<keyword id="KW-0805">Transcription regulation</keyword>
<keyword id="KW-0862">Zinc</keyword>
<keyword id="KW-0863">Zinc-finger</keyword>
<reference key="1">
    <citation type="journal article" date="1996" name="EMBO J.">
        <title>Complete nucleotide sequence of Saccharomyces cerevisiae chromosome X.</title>
        <authorList>
            <person name="Galibert F."/>
            <person name="Alexandraki D."/>
            <person name="Baur A."/>
            <person name="Boles E."/>
            <person name="Chalwatzis N."/>
            <person name="Chuat J.-C."/>
            <person name="Coster F."/>
            <person name="Cziepluch C."/>
            <person name="de Haan M."/>
            <person name="Domdey H."/>
            <person name="Durand P."/>
            <person name="Entian K.-D."/>
            <person name="Gatius M."/>
            <person name="Goffeau A."/>
            <person name="Grivell L.A."/>
            <person name="Hennemann A."/>
            <person name="Herbert C.J."/>
            <person name="Heumann K."/>
            <person name="Hilger F."/>
            <person name="Hollenberg C.P."/>
            <person name="Huang M.-E."/>
            <person name="Jacq C."/>
            <person name="Jauniaux J.-C."/>
            <person name="Katsoulou C."/>
            <person name="Kirchrath L."/>
            <person name="Kleine K."/>
            <person name="Kordes E."/>
            <person name="Koetter P."/>
            <person name="Liebl S."/>
            <person name="Louis E.J."/>
            <person name="Manus V."/>
            <person name="Mewes H.-W."/>
            <person name="Miosga T."/>
            <person name="Obermaier B."/>
            <person name="Perea J."/>
            <person name="Pohl T.M."/>
            <person name="Portetelle D."/>
            <person name="Pujol A."/>
            <person name="Purnelle B."/>
            <person name="Ramezani Rad M."/>
            <person name="Rasmussen S.W."/>
            <person name="Rose M."/>
            <person name="Rossau R."/>
            <person name="Schaaff-Gerstenschlaeger I."/>
            <person name="Smits P.H.M."/>
            <person name="Scarcez T."/>
            <person name="Soriano N."/>
            <person name="To Van D."/>
            <person name="Tzermia M."/>
            <person name="Van Broekhoven A."/>
            <person name="Vandenbol M."/>
            <person name="Wedler H."/>
            <person name="von Wettstein D."/>
            <person name="Wambutt R."/>
            <person name="Zagulski M."/>
            <person name="Zollner A."/>
            <person name="Karpfinger-Hartl L."/>
        </authorList>
    </citation>
    <scope>NUCLEOTIDE SEQUENCE [LARGE SCALE GENOMIC DNA]</scope>
    <source>
        <strain>ATCC 204508 / S288c</strain>
    </source>
</reference>
<reference key="2">
    <citation type="journal article" date="2014" name="G3 (Bethesda)">
        <title>The reference genome sequence of Saccharomyces cerevisiae: Then and now.</title>
        <authorList>
            <person name="Engel S.R."/>
            <person name="Dietrich F.S."/>
            <person name="Fisk D.G."/>
            <person name="Binkley G."/>
            <person name="Balakrishnan R."/>
            <person name="Costanzo M.C."/>
            <person name="Dwight S.S."/>
            <person name="Hitz B.C."/>
            <person name="Karra K."/>
            <person name="Nash R.S."/>
            <person name="Weng S."/>
            <person name="Wong E.D."/>
            <person name="Lloyd P."/>
            <person name="Skrzypek M.S."/>
            <person name="Miyasato S.R."/>
            <person name="Simison M."/>
            <person name="Cherry J.M."/>
        </authorList>
    </citation>
    <scope>GENOME REANNOTATION</scope>
    <source>
        <strain>ATCC 204508 / S288c</strain>
    </source>
</reference>
<reference key="3">
    <citation type="submission" date="1993-12" db="EMBL/GenBank/DDBJ databases">
        <authorList>
            <person name="Thomas D."/>
            <person name="Barbey R."/>
            <person name="Surdin-Kerjan Y."/>
        </authorList>
    </citation>
    <scope>NUCLEOTIDE SEQUENCE [GENOMIC DNA] OF 1-1231</scope>
    <source>
        <strain>RC11-6A</strain>
    </source>
</reference>
<reference key="4">
    <citation type="journal article" date="1997" name="Nucleic Acids Res.">
        <title>Variations of the C2H2 zinc finger motif in the yeast genome and classification of yeast zinc finger proteins.</title>
        <authorList>
            <person name="Boehm S."/>
            <person name="Frishman D."/>
            <person name="Mewes H.-W."/>
        </authorList>
    </citation>
    <scope>DOMAIN</scope>
</reference>
<reference key="5">
    <citation type="journal article" date="2003" name="Nature">
        <title>Global analysis of protein localization in budding yeast.</title>
        <authorList>
            <person name="Huh W.-K."/>
            <person name="Falvo J.V."/>
            <person name="Gerke L.C."/>
            <person name="Carroll A.S."/>
            <person name="Howson R.W."/>
            <person name="Weissman J.S."/>
            <person name="O'Shea E.K."/>
        </authorList>
    </citation>
    <scope>SUBCELLULAR LOCATION [LARGE SCALE ANALYSIS]</scope>
</reference>
<reference key="6">
    <citation type="journal article" date="2005" name="Curr. Genet.">
        <title>The YJR127C/ZMS1 gene product is involved in glycerol-based respiratory growth of the yeast Saccharomyces cerevisiae.</title>
        <authorList>
            <person name="Lu L."/>
            <person name="Roberts G.G."/>
            <person name="Oszust C."/>
            <person name="Hudson A.P."/>
        </authorList>
    </citation>
    <scope>FUNCTION</scope>
</reference>
<reference key="7">
    <citation type="journal article" date="2007" name="Proc. Natl. Acad. Sci. U.S.A.">
        <title>Analysis of phosphorylation sites on proteins from Saccharomyces cerevisiae by electron transfer dissociation (ETD) mass spectrometry.</title>
        <authorList>
            <person name="Chi A."/>
            <person name="Huttenhower C."/>
            <person name="Geer L.Y."/>
            <person name="Coon J.J."/>
            <person name="Syka J.E.P."/>
            <person name="Bai D.L."/>
            <person name="Shabanowitz J."/>
            <person name="Burke D.J."/>
            <person name="Troyanskaya O.G."/>
            <person name="Hunt D.F."/>
        </authorList>
    </citation>
    <scope>PHOSPHORYLATION [LARGE SCALE ANALYSIS] AT SER-632</scope>
    <scope>IDENTIFICATION BY MASS SPECTROMETRY [LARGE SCALE ANALYSIS]</scope>
</reference>
<reference key="8">
    <citation type="journal article" date="2008" name="Mol. Cell">
        <title>A library of yeast transcription factor motifs reveals a widespread function for Rsc3 in targeting nucleosome exclusion at promoters.</title>
        <authorList>
            <person name="Badis G."/>
            <person name="Chan E.T."/>
            <person name="van Bakel H."/>
            <person name="Pena-Castillo L."/>
            <person name="Tillo D."/>
            <person name="Tsui K."/>
            <person name="Carlson C.D."/>
            <person name="Gossett A.J."/>
            <person name="Hasinoff M.J."/>
            <person name="Warren C.L."/>
            <person name="Gebbia M."/>
            <person name="Talukder S."/>
            <person name="Yang A."/>
            <person name="Mnaimneh S."/>
            <person name="Terterov D."/>
            <person name="Coburn D."/>
            <person name="Li Yeo A."/>
            <person name="Yeo Z.X."/>
            <person name="Clarke N.D."/>
            <person name="Lieb J.D."/>
            <person name="Ansari A.Z."/>
            <person name="Nislow C."/>
            <person name="Hughes T.R."/>
        </authorList>
    </citation>
    <scope>DNA-BINDING</scope>
    <scope>PREDICTION OF FUNCTION</scope>
</reference>
<reference key="9">
    <citation type="journal article" date="2008" name="Mol. Cell. Proteomics">
        <title>A multidimensional chromatography technology for in-depth phosphoproteome analysis.</title>
        <authorList>
            <person name="Albuquerque C.P."/>
            <person name="Smolka M.B."/>
            <person name="Payne S.H."/>
            <person name="Bafna V."/>
            <person name="Eng J."/>
            <person name="Zhou H."/>
        </authorList>
    </citation>
    <scope>PHOSPHORYLATION [LARGE SCALE ANALYSIS] AT SER-322 AND SER-544</scope>
    <scope>IDENTIFICATION BY MASS SPECTROMETRY [LARGE SCALE ANALYSIS]</scope>
</reference>
<reference key="10">
    <citation type="journal article" date="2009" name="Science">
        <title>Global analysis of Cdk1 substrate phosphorylation sites provides insights into evolution.</title>
        <authorList>
            <person name="Holt L.J."/>
            <person name="Tuch B.B."/>
            <person name="Villen J."/>
            <person name="Johnson A.D."/>
            <person name="Gygi S.P."/>
            <person name="Morgan D.O."/>
        </authorList>
    </citation>
    <scope>PHOSPHORYLATION [LARGE SCALE ANALYSIS] AT SER-231</scope>
    <scope>IDENTIFICATION BY MASS SPECTROMETRY [LARGE SCALE ANALYSIS]</scope>
</reference>
<protein>
    <recommendedName>
        <fullName>Respiration factor 2</fullName>
    </recommendedName>
    <alternativeName>
        <fullName>Zinc finger protein ZMS1</fullName>
    </alternativeName>
</protein>
<comment type="function">
    <text evidence="4">Transcription factor that regulates expression of both nuclear and mitochondrial genes, and more specifically those required for glycerol-based growth and respiration.</text>
</comment>
<comment type="subcellular location">
    <subcellularLocation>
        <location evidence="3">Nucleus</location>
    </subcellularLocation>
</comment>
<comment type="similarity">
    <text evidence="5">Belongs to the RSF2/TDA9 family.</text>
</comment>
<comment type="sequence caution" evidence="5">
    <conflict type="frameshift">
        <sequence resource="EMBL-CDS" id="AAA35240"/>
    </conflict>
</comment>
<accession>P46974</accession>
<accession>D6VWU6</accession>
<dbReference type="EMBL" id="Z49627">
    <property type="protein sequence ID" value="CAA89658.1"/>
    <property type="molecule type" value="Genomic_DNA"/>
</dbReference>
<dbReference type="EMBL" id="L26506">
    <property type="protein sequence ID" value="AAA35240.1"/>
    <property type="status" value="ALT_FRAME"/>
    <property type="molecule type" value="Genomic_DNA"/>
</dbReference>
<dbReference type="EMBL" id="BK006943">
    <property type="protein sequence ID" value="DAA08912.1"/>
    <property type="molecule type" value="Genomic_DNA"/>
</dbReference>
<dbReference type="PIR" id="S57150">
    <property type="entry name" value="S57150"/>
</dbReference>
<dbReference type="RefSeq" id="NP_012661.3">
    <property type="nucleotide sequence ID" value="NM_001181785.3"/>
</dbReference>
<dbReference type="SMR" id="P46974"/>
<dbReference type="BioGRID" id="33883">
    <property type="interactions" value="67"/>
</dbReference>
<dbReference type="DIP" id="DIP-2835N"/>
<dbReference type="FunCoup" id="P46974">
    <property type="interactions" value="983"/>
</dbReference>
<dbReference type="IntAct" id="P46974">
    <property type="interactions" value="9"/>
</dbReference>
<dbReference type="MINT" id="P46974"/>
<dbReference type="STRING" id="4932.YJR127C"/>
<dbReference type="GlyGen" id="P46974">
    <property type="glycosylation" value="1 site"/>
</dbReference>
<dbReference type="iPTMnet" id="P46974"/>
<dbReference type="PaxDb" id="4932-YJR127C"/>
<dbReference type="PeptideAtlas" id="P46974"/>
<dbReference type="EnsemblFungi" id="YJR127C_mRNA">
    <property type="protein sequence ID" value="YJR127C"/>
    <property type="gene ID" value="YJR127C"/>
</dbReference>
<dbReference type="GeneID" id="853592"/>
<dbReference type="KEGG" id="sce:YJR127C"/>
<dbReference type="AGR" id="SGD:S000003888"/>
<dbReference type="SGD" id="S000003888">
    <property type="gene designation" value="RSF2"/>
</dbReference>
<dbReference type="VEuPathDB" id="FungiDB:YJR127C"/>
<dbReference type="eggNOG" id="KOG1721">
    <property type="taxonomic scope" value="Eukaryota"/>
</dbReference>
<dbReference type="GeneTree" id="ENSGT00940000176773"/>
<dbReference type="HOGENOM" id="CLU_003977_1_0_1"/>
<dbReference type="InParanoid" id="P46974"/>
<dbReference type="OMA" id="KYWENLY"/>
<dbReference type="OrthoDB" id="6077919at2759"/>
<dbReference type="BioCyc" id="YEAST:G3O-31748-MONOMER"/>
<dbReference type="BioGRID-ORCS" id="853592">
    <property type="hits" value="0 hits in 13 CRISPR screens"/>
</dbReference>
<dbReference type="PRO" id="PR:P46974"/>
<dbReference type="Proteomes" id="UP000002311">
    <property type="component" value="Chromosome X"/>
</dbReference>
<dbReference type="RNAct" id="P46974">
    <property type="molecule type" value="protein"/>
</dbReference>
<dbReference type="GO" id="GO:0000785">
    <property type="term" value="C:chromatin"/>
    <property type="evidence" value="ECO:0000318"/>
    <property type="project" value="GO_Central"/>
</dbReference>
<dbReference type="GO" id="GO:0005737">
    <property type="term" value="C:cytoplasm"/>
    <property type="evidence" value="ECO:0007005"/>
    <property type="project" value="SGD"/>
</dbReference>
<dbReference type="GO" id="GO:0005634">
    <property type="term" value="C:nucleus"/>
    <property type="evidence" value="ECO:0007005"/>
    <property type="project" value="SGD"/>
</dbReference>
<dbReference type="GO" id="GO:0000981">
    <property type="term" value="F:DNA-binding transcription factor activity, RNA polymerase II-specific"/>
    <property type="evidence" value="ECO:0000318"/>
    <property type="project" value="GO_Central"/>
</dbReference>
<dbReference type="GO" id="GO:0000978">
    <property type="term" value="F:RNA polymerase II cis-regulatory region sequence-specific DNA binding"/>
    <property type="evidence" value="ECO:0000318"/>
    <property type="project" value="GO_Central"/>
</dbReference>
<dbReference type="GO" id="GO:0043565">
    <property type="term" value="F:sequence-specific DNA binding"/>
    <property type="evidence" value="ECO:0007005"/>
    <property type="project" value="SGD"/>
</dbReference>
<dbReference type="GO" id="GO:0008270">
    <property type="term" value="F:zinc ion binding"/>
    <property type="evidence" value="ECO:0007669"/>
    <property type="project" value="UniProtKB-KW"/>
</dbReference>
<dbReference type="GO" id="GO:0006351">
    <property type="term" value="P:DNA-templated transcription"/>
    <property type="evidence" value="ECO:0007669"/>
    <property type="project" value="InterPro"/>
</dbReference>
<dbReference type="GO" id="GO:0006355">
    <property type="term" value="P:regulation of DNA-templated transcription"/>
    <property type="evidence" value="ECO:0000315"/>
    <property type="project" value="SGD"/>
</dbReference>
<dbReference type="GO" id="GO:0006357">
    <property type="term" value="P:regulation of transcription by RNA polymerase II"/>
    <property type="evidence" value="ECO:0000318"/>
    <property type="project" value="GO_Central"/>
</dbReference>
<dbReference type="CDD" id="cd12148">
    <property type="entry name" value="fungal_TF_MHR"/>
    <property type="match status" value="1"/>
</dbReference>
<dbReference type="FunFam" id="3.30.160.60:FF:000576">
    <property type="entry name" value="C2H2 transcription factor (AmdX)"/>
    <property type="match status" value="1"/>
</dbReference>
<dbReference type="Gene3D" id="3.30.160.60">
    <property type="entry name" value="Classic Zinc Finger"/>
    <property type="match status" value="2"/>
</dbReference>
<dbReference type="InterPro" id="IPR007219">
    <property type="entry name" value="Transcription_factor_dom_fun"/>
</dbReference>
<dbReference type="InterPro" id="IPR051059">
    <property type="entry name" value="VerF-like"/>
</dbReference>
<dbReference type="InterPro" id="IPR036236">
    <property type="entry name" value="Znf_C2H2_sf"/>
</dbReference>
<dbReference type="InterPro" id="IPR013087">
    <property type="entry name" value="Znf_C2H2_type"/>
</dbReference>
<dbReference type="PANTHER" id="PTHR40626">
    <property type="entry name" value="MIP31509P"/>
    <property type="match status" value="1"/>
</dbReference>
<dbReference type="PANTHER" id="PTHR40626:SF13">
    <property type="entry name" value="RESPIRATION FACTOR 2-RELATED"/>
    <property type="match status" value="1"/>
</dbReference>
<dbReference type="Pfam" id="PF04082">
    <property type="entry name" value="Fungal_trans"/>
    <property type="match status" value="1"/>
</dbReference>
<dbReference type="SMART" id="SM00355">
    <property type="entry name" value="ZnF_C2H2"/>
    <property type="match status" value="2"/>
</dbReference>
<dbReference type="SUPFAM" id="SSF57667">
    <property type="entry name" value="beta-beta-alpha zinc fingers"/>
    <property type="match status" value="1"/>
</dbReference>
<dbReference type="PROSITE" id="PS00028">
    <property type="entry name" value="ZINC_FINGER_C2H2_1"/>
    <property type="match status" value="2"/>
</dbReference>
<dbReference type="PROSITE" id="PS50157">
    <property type="entry name" value="ZINC_FINGER_C2H2_2"/>
    <property type="match status" value="2"/>
</dbReference>